<keyword id="KW-0472">Membrane</keyword>
<keyword id="KW-0520">NAD</keyword>
<keyword id="KW-0521">NADP</keyword>
<keyword id="KW-0618">Plastoquinone</keyword>
<keyword id="KW-0874">Quinone</keyword>
<keyword id="KW-1185">Reference proteome</keyword>
<keyword id="KW-0793">Thylakoid</keyword>
<keyword id="KW-1278">Translocase</keyword>
<keyword id="KW-0813">Transport</keyword>
<accession>Q31L05</accession>
<dbReference type="EC" id="7.1.1.-" evidence="1"/>
<dbReference type="EMBL" id="CP000100">
    <property type="protein sequence ID" value="ABB58264.1"/>
    <property type="molecule type" value="Genomic_DNA"/>
</dbReference>
<dbReference type="RefSeq" id="WP_011244174.1">
    <property type="nucleotide sequence ID" value="NZ_JACJTX010000001.1"/>
</dbReference>
<dbReference type="SMR" id="Q31L05"/>
<dbReference type="STRING" id="1140.Synpcc7942_2234"/>
<dbReference type="PaxDb" id="1140-Synpcc7942_2234"/>
<dbReference type="KEGG" id="syf:Synpcc7942_2234"/>
<dbReference type="eggNOG" id="ENOG502ZBMI">
    <property type="taxonomic scope" value="Bacteria"/>
</dbReference>
<dbReference type="HOGENOM" id="CLU_087432_0_0_3"/>
<dbReference type="OrthoDB" id="510798at2"/>
<dbReference type="BioCyc" id="MetaCyc:SYNPCC7942_2234-MONOMER"/>
<dbReference type="BioCyc" id="SYNEL:SYNPCC7942_2234-MONOMER"/>
<dbReference type="Proteomes" id="UP000889800">
    <property type="component" value="Chromosome"/>
</dbReference>
<dbReference type="GO" id="GO:0031676">
    <property type="term" value="C:plasma membrane-derived thylakoid membrane"/>
    <property type="evidence" value="ECO:0007669"/>
    <property type="project" value="UniProtKB-SubCell"/>
</dbReference>
<dbReference type="GO" id="GO:0016655">
    <property type="term" value="F:oxidoreductase activity, acting on NAD(P)H, quinone or similar compound as acceptor"/>
    <property type="evidence" value="ECO:0007669"/>
    <property type="project" value="UniProtKB-UniRule"/>
</dbReference>
<dbReference type="GO" id="GO:0048038">
    <property type="term" value="F:quinone binding"/>
    <property type="evidence" value="ECO:0007669"/>
    <property type="project" value="UniProtKB-KW"/>
</dbReference>
<dbReference type="HAMAP" id="MF_01353">
    <property type="entry name" value="NDH1_NDH1N"/>
    <property type="match status" value="1"/>
</dbReference>
<dbReference type="InterPro" id="IPR020874">
    <property type="entry name" value="NAD(P)H-quinone_OxRdtase_su_N"/>
</dbReference>
<dbReference type="PANTHER" id="PTHR35515">
    <property type="entry name" value="NAD(P)H-QUINONE OXIDOREDUCTASE SUBUNIT N, CHLOROPLASTIC"/>
    <property type="match status" value="1"/>
</dbReference>
<dbReference type="PANTHER" id="PTHR35515:SF1">
    <property type="entry name" value="NAD(P)H-QUINONE OXIDOREDUCTASE SUBUNIT N, CHLOROPLASTIC"/>
    <property type="match status" value="1"/>
</dbReference>
<dbReference type="Pfam" id="PF11909">
    <property type="entry name" value="NdhN"/>
    <property type="match status" value="1"/>
</dbReference>
<feature type="chain" id="PRO_0000352231" description="NAD(P)H-quinone oxidoreductase subunit N">
    <location>
        <begin position="1"/>
        <end position="158"/>
    </location>
</feature>
<proteinExistence type="inferred from homology"/>
<sequence length="158" mass="17145">MALITTGSKFLRALEQEGALAVYAPLEGGYEGRYLRRLRSKGYSALTYSARGLGDPAQFLMDIHGVRPPHLGKQTIGNEAAVGRVEYVLPLVGYPLQNLPANAKGLVLWLLEGHVLSPQELSYFVTLPQAEPRLKVVIEMGGDRGFSWQPLAAVAEAA</sequence>
<organism>
    <name type="scientific">Synechococcus elongatus (strain ATCC 33912 / PCC 7942 / FACHB-805)</name>
    <name type="common">Anacystis nidulans R2</name>
    <dbReference type="NCBI Taxonomy" id="1140"/>
    <lineage>
        <taxon>Bacteria</taxon>
        <taxon>Bacillati</taxon>
        <taxon>Cyanobacteriota</taxon>
        <taxon>Cyanophyceae</taxon>
        <taxon>Synechococcales</taxon>
        <taxon>Synechococcaceae</taxon>
        <taxon>Synechococcus</taxon>
    </lineage>
</organism>
<reference key="1">
    <citation type="submission" date="2005-08" db="EMBL/GenBank/DDBJ databases">
        <title>Complete sequence of chromosome 1 of Synechococcus elongatus PCC 7942.</title>
        <authorList>
            <consortium name="US DOE Joint Genome Institute"/>
            <person name="Copeland A."/>
            <person name="Lucas S."/>
            <person name="Lapidus A."/>
            <person name="Barry K."/>
            <person name="Detter J.C."/>
            <person name="Glavina T."/>
            <person name="Hammon N."/>
            <person name="Israni S."/>
            <person name="Pitluck S."/>
            <person name="Schmutz J."/>
            <person name="Larimer F."/>
            <person name="Land M."/>
            <person name="Kyrpides N."/>
            <person name="Lykidis A."/>
            <person name="Golden S."/>
            <person name="Richardson P."/>
        </authorList>
    </citation>
    <scope>NUCLEOTIDE SEQUENCE [LARGE SCALE GENOMIC DNA]</scope>
    <source>
        <strain>ATCC 33912 / PCC 7942 / FACHB-805</strain>
    </source>
</reference>
<name>NDHN_SYNE7</name>
<comment type="function">
    <text evidence="1">NDH-1 shuttles electrons from an unknown electron donor, via FMN and iron-sulfur (Fe-S) centers, to quinones in the respiratory and/or the photosynthetic chain. The immediate electron acceptor for the enzyme in this species is believed to be plastoquinone. Couples the redox reaction to proton translocation, and thus conserves the redox energy in a proton gradient. Cyanobacterial NDH-1 also plays a role in inorganic carbon-concentration.</text>
</comment>
<comment type="catalytic activity">
    <reaction evidence="1">
        <text>a plastoquinone + NADH + (n+1) H(+)(in) = a plastoquinol + NAD(+) + n H(+)(out)</text>
        <dbReference type="Rhea" id="RHEA:42608"/>
        <dbReference type="Rhea" id="RHEA-COMP:9561"/>
        <dbReference type="Rhea" id="RHEA-COMP:9562"/>
        <dbReference type="ChEBI" id="CHEBI:15378"/>
        <dbReference type="ChEBI" id="CHEBI:17757"/>
        <dbReference type="ChEBI" id="CHEBI:57540"/>
        <dbReference type="ChEBI" id="CHEBI:57945"/>
        <dbReference type="ChEBI" id="CHEBI:62192"/>
    </reaction>
</comment>
<comment type="catalytic activity">
    <reaction evidence="1">
        <text>a plastoquinone + NADPH + (n+1) H(+)(in) = a plastoquinol + NADP(+) + n H(+)(out)</text>
        <dbReference type="Rhea" id="RHEA:42612"/>
        <dbReference type="Rhea" id="RHEA-COMP:9561"/>
        <dbReference type="Rhea" id="RHEA-COMP:9562"/>
        <dbReference type="ChEBI" id="CHEBI:15378"/>
        <dbReference type="ChEBI" id="CHEBI:17757"/>
        <dbReference type="ChEBI" id="CHEBI:57783"/>
        <dbReference type="ChEBI" id="CHEBI:58349"/>
        <dbReference type="ChEBI" id="CHEBI:62192"/>
    </reaction>
</comment>
<comment type="subunit">
    <text evidence="1">NDH-1 can be composed of about 15 different subunits; different subcomplexes with different compositions have been identified which probably have different functions.</text>
</comment>
<comment type="subcellular location">
    <subcellularLocation>
        <location evidence="1">Cellular thylakoid membrane</location>
        <topology evidence="1">Peripheral membrane protein</topology>
        <orientation evidence="1">Cytoplasmic side</orientation>
    </subcellularLocation>
</comment>
<comment type="similarity">
    <text evidence="1">Belongs to the complex I NdhN subunit family.</text>
</comment>
<gene>
    <name evidence="1" type="primary">ndhN</name>
    <name type="ordered locus">Synpcc7942_2234</name>
</gene>
<protein>
    <recommendedName>
        <fullName evidence="1">NAD(P)H-quinone oxidoreductase subunit N</fullName>
        <ecNumber evidence="1">7.1.1.-</ecNumber>
    </recommendedName>
    <alternativeName>
        <fullName evidence="1">NAD(P)H dehydrogenase I subunit N</fullName>
        <shortName evidence="1">NDH-1 subunit N</shortName>
        <shortName evidence="1">NDH-N</shortName>
    </alternativeName>
</protein>
<evidence type="ECO:0000255" key="1">
    <source>
        <dbReference type="HAMAP-Rule" id="MF_01353"/>
    </source>
</evidence>